<reference key="1">
    <citation type="journal article" date="2009" name="PLoS Genet.">
        <title>Organised genome dynamics in the Escherichia coli species results in highly diverse adaptive paths.</title>
        <authorList>
            <person name="Touchon M."/>
            <person name="Hoede C."/>
            <person name="Tenaillon O."/>
            <person name="Barbe V."/>
            <person name="Baeriswyl S."/>
            <person name="Bidet P."/>
            <person name="Bingen E."/>
            <person name="Bonacorsi S."/>
            <person name="Bouchier C."/>
            <person name="Bouvet O."/>
            <person name="Calteau A."/>
            <person name="Chiapello H."/>
            <person name="Clermont O."/>
            <person name="Cruveiller S."/>
            <person name="Danchin A."/>
            <person name="Diard M."/>
            <person name="Dossat C."/>
            <person name="Karoui M.E."/>
            <person name="Frapy E."/>
            <person name="Garry L."/>
            <person name="Ghigo J.M."/>
            <person name="Gilles A.M."/>
            <person name="Johnson J."/>
            <person name="Le Bouguenec C."/>
            <person name="Lescat M."/>
            <person name="Mangenot S."/>
            <person name="Martinez-Jehanne V."/>
            <person name="Matic I."/>
            <person name="Nassif X."/>
            <person name="Oztas S."/>
            <person name="Petit M.A."/>
            <person name="Pichon C."/>
            <person name="Rouy Z."/>
            <person name="Ruf C.S."/>
            <person name="Schneider D."/>
            <person name="Tourret J."/>
            <person name="Vacherie B."/>
            <person name="Vallenet D."/>
            <person name="Medigue C."/>
            <person name="Rocha E.P.C."/>
            <person name="Denamur E."/>
        </authorList>
    </citation>
    <scope>NUCLEOTIDE SEQUENCE [LARGE SCALE GENOMIC DNA]</scope>
    <source>
        <strain>55989 / EAEC</strain>
    </source>
</reference>
<organism>
    <name type="scientific">Escherichia coli (strain 55989 / EAEC)</name>
    <dbReference type="NCBI Taxonomy" id="585055"/>
    <lineage>
        <taxon>Bacteria</taxon>
        <taxon>Pseudomonadati</taxon>
        <taxon>Pseudomonadota</taxon>
        <taxon>Gammaproteobacteria</taxon>
        <taxon>Enterobacterales</taxon>
        <taxon>Enterobacteriaceae</taxon>
        <taxon>Escherichia</taxon>
    </lineage>
</organism>
<comment type="similarity">
    <text evidence="1">Belongs to the UPF0250 family.</text>
</comment>
<keyword id="KW-1185">Reference proteome</keyword>
<protein>
    <recommendedName>
        <fullName evidence="1">UPF0250 protein YbeD</fullName>
    </recommendedName>
</protein>
<sequence>MKTKLNELLEFPTPFTYKVMGQALPELVDQVVEVVQRHAPGDYTPTVKPSSKGNYHSVSITINATHIEQVETLYEELGKIDIVRMVL</sequence>
<name>YBED_ECO55</name>
<dbReference type="EMBL" id="CU928145">
    <property type="protein sequence ID" value="CAU96495.1"/>
    <property type="molecule type" value="Genomic_DNA"/>
</dbReference>
<dbReference type="RefSeq" id="WP_000850550.1">
    <property type="nucleotide sequence ID" value="NZ_CP028304.1"/>
</dbReference>
<dbReference type="SMR" id="B7L9H5"/>
<dbReference type="GeneID" id="93776851"/>
<dbReference type="KEGG" id="eck:EC55989_0623"/>
<dbReference type="HOGENOM" id="CLU_161438_2_1_6"/>
<dbReference type="Proteomes" id="UP000000746">
    <property type="component" value="Chromosome"/>
</dbReference>
<dbReference type="GO" id="GO:0005829">
    <property type="term" value="C:cytosol"/>
    <property type="evidence" value="ECO:0007669"/>
    <property type="project" value="TreeGrafter"/>
</dbReference>
<dbReference type="FunFam" id="3.30.70.260:FF:000002">
    <property type="entry name" value="UPF0250 protein YbeD"/>
    <property type="match status" value="1"/>
</dbReference>
<dbReference type="Gene3D" id="3.30.70.260">
    <property type="match status" value="1"/>
</dbReference>
<dbReference type="HAMAP" id="MF_00659">
    <property type="entry name" value="UPF0250"/>
    <property type="match status" value="1"/>
</dbReference>
<dbReference type="InterPro" id="IPR007454">
    <property type="entry name" value="UPF0250_YbeD-like"/>
</dbReference>
<dbReference type="InterPro" id="IPR027471">
    <property type="entry name" value="YbeD-like_sf"/>
</dbReference>
<dbReference type="NCBIfam" id="NF003447">
    <property type="entry name" value="PRK04998.1"/>
    <property type="match status" value="1"/>
</dbReference>
<dbReference type="PANTHER" id="PTHR38036">
    <property type="entry name" value="UPF0250 PROTEIN YBED"/>
    <property type="match status" value="1"/>
</dbReference>
<dbReference type="PANTHER" id="PTHR38036:SF1">
    <property type="entry name" value="UPF0250 PROTEIN YBED"/>
    <property type="match status" value="1"/>
</dbReference>
<dbReference type="Pfam" id="PF04359">
    <property type="entry name" value="DUF493"/>
    <property type="match status" value="1"/>
</dbReference>
<dbReference type="SUPFAM" id="SSF117991">
    <property type="entry name" value="YbeD/HP0495-like"/>
    <property type="match status" value="1"/>
</dbReference>
<evidence type="ECO:0000255" key="1">
    <source>
        <dbReference type="HAMAP-Rule" id="MF_00659"/>
    </source>
</evidence>
<feature type="chain" id="PRO_1000200437" description="UPF0250 protein YbeD">
    <location>
        <begin position="1"/>
        <end position="87"/>
    </location>
</feature>
<accession>B7L9H5</accession>
<proteinExistence type="inferred from homology"/>
<gene>
    <name evidence="1" type="primary">ybeD</name>
    <name type="ordered locus">EC55989_0623</name>
</gene>